<comment type="function">
    <text evidence="1">Catalyzes the sequential NAD-dependent oxidations of L-histidinol to L-histidinaldehyde and then to L-histidine.</text>
</comment>
<comment type="catalytic activity">
    <reaction evidence="1">
        <text>L-histidinol + 2 NAD(+) + H2O = L-histidine + 2 NADH + 3 H(+)</text>
        <dbReference type="Rhea" id="RHEA:20641"/>
        <dbReference type="ChEBI" id="CHEBI:15377"/>
        <dbReference type="ChEBI" id="CHEBI:15378"/>
        <dbReference type="ChEBI" id="CHEBI:57540"/>
        <dbReference type="ChEBI" id="CHEBI:57595"/>
        <dbReference type="ChEBI" id="CHEBI:57699"/>
        <dbReference type="ChEBI" id="CHEBI:57945"/>
        <dbReference type="EC" id="1.1.1.23"/>
    </reaction>
</comment>
<comment type="cofactor">
    <cofactor evidence="1">
        <name>Zn(2+)</name>
        <dbReference type="ChEBI" id="CHEBI:29105"/>
    </cofactor>
    <text evidence="1">Binds 1 zinc ion per subunit.</text>
</comment>
<comment type="pathway">
    <text evidence="1">Amino-acid biosynthesis; L-histidine biosynthesis; L-histidine from 5-phospho-alpha-D-ribose 1-diphosphate: step 9/9.</text>
</comment>
<comment type="subunit">
    <text evidence="1">Homodimer.</text>
</comment>
<comment type="similarity">
    <text evidence="1">Belongs to the histidinol dehydrogenase family.</text>
</comment>
<sequence>MISTQYLIPTYWHRCSISEQLTLLTRPINKHNNSIHLDVKYILDHVSKLGDNALIKFNLQFDYVNTISLKISPNKIINSGNSLSKPIKKAIHSAIDNITRFHTAQYFPKVDLEIIPGVRCKQIIRPLHTIGLYVPGGSTPLPSTVMMLGIPAKIAQCKRIILCSPPPIPNIILYTAQLCGIEEIYQVGGAQAIAAMGFGTESIPRVDKIFGPGNIWVTEAKRQIHYITNKVAIDMLAGPSEILIIADKTANPIFIAADLLSQAEHGPDSHIILITPDMNLAQQTRQELYKQIQNLDRIDIIHQSLTHARIIITDNIMECFQISNDYAPEHLLIQTQNPENYLKYITNAGSIFLGHWSPESAGDYASGTNHVLPTYGHATTTSALGVADFQKRILVQELTQHGLLQLSSTIQTLTKIEKLKAHEYSVIHRINYIKGTT</sequence>
<reference key="1">
    <citation type="journal article" date="2003" name="Proc. Natl. Acad. Sci. U.S.A.">
        <title>The genome sequence of Blochmannia floridanus: comparative analysis of reduced genomes.</title>
        <authorList>
            <person name="Gil R."/>
            <person name="Silva F.J."/>
            <person name="Zientz E."/>
            <person name="Delmotte F."/>
            <person name="Gonzalez-Candelas F."/>
            <person name="Latorre A."/>
            <person name="Rausell C."/>
            <person name="Kamerbeek J."/>
            <person name="Gadau J."/>
            <person name="Hoelldobler B."/>
            <person name="van Ham R.C.H.J."/>
            <person name="Gross R."/>
            <person name="Moya A."/>
        </authorList>
    </citation>
    <scope>NUCLEOTIDE SEQUENCE [LARGE SCALE GENOMIC DNA]</scope>
</reference>
<keyword id="KW-0028">Amino-acid biosynthesis</keyword>
<keyword id="KW-0368">Histidine biosynthesis</keyword>
<keyword id="KW-0479">Metal-binding</keyword>
<keyword id="KW-0520">NAD</keyword>
<keyword id="KW-0560">Oxidoreductase</keyword>
<keyword id="KW-1185">Reference proteome</keyword>
<keyword id="KW-0862">Zinc</keyword>
<accession>Q7VQX0</accession>
<name>HISX_BLOFL</name>
<proteinExistence type="inferred from homology"/>
<organism>
    <name type="scientific">Blochmanniella floridana</name>
    <dbReference type="NCBI Taxonomy" id="203907"/>
    <lineage>
        <taxon>Bacteria</taxon>
        <taxon>Pseudomonadati</taxon>
        <taxon>Pseudomonadota</taxon>
        <taxon>Gammaproteobacteria</taxon>
        <taxon>Enterobacterales</taxon>
        <taxon>Enterobacteriaceae</taxon>
        <taxon>ant endosymbionts</taxon>
        <taxon>Candidatus Blochmanniella</taxon>
    </lineage>
</organism>
<evidence type="ECO:0000255" key="1">
    <source>
        <dbReference type="HAMAP-Rule" id="MF_01024"/>
    </source>
</evidence>
<gene>
    <name evidence="1" type="primary">hisD</name>
    <name type="ordered locus">Bfl463</name>
</gene>
<dbReference type="EC" id="1.1.1.23" evidence="1"/>
<dbReference type="EMBL" id="BX248583">
    <property type="protein sequence ID" value="CAD83522.1"/>
    <property type="molecule type" value="Genomic_DNA"/>
</dbReference>
<dbReference type="SMR" id="Q7VQX0"/>
<dbReference type="STRING" id="203907.Bfl463"/>
<dbReference type="KEGG" id="bfl:Bfl463"/>
<dbReference type="eggNOG" id="COG0141">
    <property type="taxonomic scope" value="Bacteria"/>
</dbReference>
<dbReference type="HOGENOM" id="CLU_006732_3_0_6"/>
<dbReference type="OrthoDB" id="9805269at2"/>
<dbReference type="UniPathway" id="UPA00031">
    <property type="reaction ID" value="UER00014"/>
</dbReference>
<dbReference type="Proteomes" id="UP000002192">
    <property type="component" value="Chromosome"/>
</dbReference>
<dbReference type="GO" id="GO:0005829">
    <property type="term" value="C:cytosol"/>
    <property type="evidence" value="ECO:0007669"/>
    <property type="project" value="TreeGrafter"/>
</dbReference>
<dbReference type="GO" id="GO:0004399">
    <property type="term" value="F:histidinol dehydrogenase activity"/>
    <property type="evidence" value="ECO:0007669"/>
    <property type="project" value="UniProtKB-UniRule"/>
</dbReference>
<dbReference type="GO" id="GO:0051287">
    <property type="term" value="F:NAD binding"/>
    <property type="evidence" value="ECO:0007669"/>
    <property type="project" value="InterPro"/>
</dbReference>
<dbReference type="GO" id="GO:0008270">
    <property type="term" value="F:zinc ion binding"/>
    <property type="evidence" value="ECO:0007669"/>
    <property type="project" value="UniProtKB-UniRule"/>
</dbReference>
<dbReference type="GO" id="GO:0000105">
    <property type="term" value="P:L-histidine biosynthetic process"/>
    <property type="evidence" value="ECO:0007669"/>
    <property type="project" value="UniProtKB-UniRule"/>
</dbReference>
<dbReference type="CDD" id="cd06572">
    <property type="entry name" value="Histidinol_dh"/>
    <property type="match status" value="1"/>
</dbReference>
<dbReference type="FunFam" id="3.40.50.1980:FF:000001">
    <property type="entry name" value="Histidinol dehydrogenase"/>
    <property type="match status" value="1"/>
</dbReference>
<dbReference type="FunFam" id="3.40.50.1980:FF:000002">
    <property type="entry name" value="Histidinol dehydrogenase, chloroplastic"/>
    <property type="match status" value="1"/>
</dbReference>
<dbReference type="Gene3D" id="1.20.5.1300">
    <property type="match status" value="1"/>
</dbReference>
<dbReference type="Gene3D" id="3.40.50.1980">
    <property type="entry name" value="Nitrogenase molybdenum iron protein domain"/>
    <property type="match status" value="2"/>
</dbReference>
<dbReference type="HAMAP" id="MF_01024">
    <property type="entry name" value="HisD"/>
    <property type="match status" value="1"/>
</dbReference>
<dbReference type="InterPro" id="IPR016161">
    <property type="entry name" value="Ald_DH/histidinol_DH"/>
</dbReference>
<dbReference type="InterPro" id="IPR001692">
    <property type="entry name" value="Histidinol_DH_CS"/>
</dbReference>
<dbReference type="InterPro" id="IPR022695">
    <property type="entry name" value="Histidinol_DH_monofunct"/>
</dbReference>
<dbReference type="InterPro" id="IPR012131">
    <property type="entry name" value="Hstdl_DH"/>
</dbReference>
<dbReference type="NCBIfam" id="TIGR00069">
    <property type="entry name" value="hisD"/>
    <property type="match status" value="1"/>
</dbReference>
<dbReference type="PANTHER" id="PTHR21256:SF2">
    <property type="entry name" value="HISTIDINE BIOSYNTHESIS TRIFUNCTIONAL PROTEIN"/>
    <property type="match status" value="1"/>
</dbReference>
<dbReference type="PANTHER" id="PTHR21256">
    <property type="entry name" value="HISTIDINOL DEHYDROGENASE HDH"/>
    <property type="match status" value="1"/>
</dbReference>
<dbReference type="Pfam" id="PF00815">
    <property type="entry name" value="Histidinol_dh"/>
    <property type="match status" value="1"/>
</dbReference>
<dbReference type="PIRSF" id="PIRSF000099">
    <property type="entry name" value="Histidinol_dh"/>
    <property type="match status" value="1"/>
</dbReference>
<dbReference type="PRINTS" id="PR00083">
    <property type="entry name" value="HOLDHDRGNASE"/>
</dbReference>
<dbReference type="SUPFAM" id="SSF53720">
    <property type="entry name" value="ALDH-like"/>
    <property type="match status" value="1"/>
</dbReference>
<dbReference type="PROSITE" id="PS00611">
    <property type="entry name" value="HISOL_DEHYDROGENASE"/>
    <property type="match status" value="1"/>
</dbReference>
<feature type="chain" id="PRO_0000135734" description="Histidinol dehydrogenase">
    <location>
        <begin position="1"/>
        <end position="437"/>
    </location>
</feature>
<feature type="active site" description="Proton acceptor" evidence="1">
    <location>
        <position position="329"/>
    </location>
</feature>
<feature type="active site" description="Proton acceptor" evidence="1">
    <location>
        <position position="330"/>
    </location>
</feature>
<feature type="binding site" evidence="1">
    <location>
        <position position="133"/>
    </location>
    <ligand>
        <name>NAD(+)</name>
        <dbReference type="ChEBI" id="CHEBI:57540"/>
    </ligand>
</feature>
<feature type="binding site" evidence="1">
    <location>
        <position position="191"/>
    </location>
    <ligand>
        <name>NAD(+)</name>
        <dbReference type="ChEBI" id="CHEBI:57540"/>
    </ligand>
</feature>
<feature type="binding site" evidence="1">
    <location>
        <position position="214"/>
    </location>
    <ligand>
        <name>NAD(+)</name>
        <dbReference type="ChEBI" id="CHEBI:57540"/>
    </ligand>
</feature>
<feature type="binding site" evidence="1">
    <location>
        <position position="240"/>
    </location>
    <ligand>
        <name>substrate</name>
    </ligand>
</feature>
<feature type="binding site" evidence="1">
    <location>
        <position position="262"/>
    </location>
    <ligand>
        <name>substrate</name>
    </ligand>
</feature>
<feature type="binding site" evidence="1">
    <location>
        <position position="262"/>
    </location>
    <ligand>
        <name>Zn(2+)</name>
        <dbReference type="ChEBI" id="CHEBI:29105"/>
    </ligand>
</feature>
<feature type="binding site" evidence="1">
    <location>
        <position position="265"/>
    </location>
    <ligand>
        <name>substrate</name>
    </ligand>
</feature>
<feature type="binding site" evidence="1">
    <location>
        <position position="265"/>
    </location>
    <ligand>
        <name>Zn(2+)</name>
        <dbReference type="ChEBI" id="CHEBI:29105"/>
    </ligand>
</feature>
<feature type="binding site" evidence="1">
    <location>
        <position position="330"/>
    </location>
    <ligand>
        <name>substrate</name>
    </ligand>
</feature>
<feature type="binding site" evidence="1">
    <location>
        <position position="363"/>
    </location>
    <ligand>
        <name>substrate</name>
    </ligand>
</feature>
<feature type="binding site" evidence="1">
    <location>
        <position position="363"/>
    </location>
    <ligand>
        <name>Zn(2+)</name>
        <dbReference type="ChEBI" id="CHEBI:29105"/>
    </ligand>
</feature>
<feature type="binding site" evidence="1">
    <location>
        <position position="417"/>
    </location>
    <ligand>
        <name>substrate</name>
    </ligand>
</feature>
<feature type="binding site" evidence="1">
    <location>
        <position position="422"/>
    </location>
    <ligand>
        <name>substrate</name>
    </ligand>
</feature>
<feature type="binding site" evidence="1">
    <location>
        <position position="422"/>
    </location>
    <ligand>
        <name>Zn(2+)</name>
        <dbReference type="ChEBI" id="CHEBI:29105"/>
    </ligand>
</feature>
<protein>
    <recommendedName>
        <fullName evidence="1">Histidinol dehydrogenase</fullName>
        <shortName evidence="1">HDH</shortName>
        <ecNumber evidence="1">1.1.1.23</ecNumber>
    </recommendedName>
</protein>